<accession>B8GUF9</accession>
<sequence length="224" mass="25039">MLLTIPELLDAAQLAEIRRLLADAPFTDGRYSAGADARRVKHNEEVDPSDTRVRALNQLVLMPLYRHETFQAAALPRKLSGAFFARYLPGMQYGAHVDDPVMGPEGGRYRTDVSVTVFIGEPQSYEGGELVVETDFGEQQVKLPAGHAVIYPSSSLHRVSPVTGGERLVAVAWAESMVRDPARRQMLYELYQVHEALRRDNPDAEVTRRAGHVRANLMRMWADV</sequence>
<reference key="1">
    <citation type="journal article" date="2011" name="Stand. Genomic Sci.">
        <title>Complete genome sequence of 'Thioalkalivibrio sulfidophilus' HL-EbGr7.</title>
        <authorList>
            <person name="Muyzer G."/>
            <person name="Sorokin D.Y."/>
            <person name="Mavromatis K."/>
            <person name="Lapidus A."/>
            <person name="Clum A."/>
            <person name="Ivanova N."/>
            <person name="Pati A."/>
            <person name="d'Haeseleer P."/>
            <person name="Woyke T."/>
            <person name="Kyrpides N.C."/>
        </authorList>
    </citation>
    <scope>NUCLEOTIDE SEQUENCE [LARGE SCALE GENOMIC DNA]</scope>
    <source>
        <strain>HL-EbGR7</strain>
    </source>
</reference>
<gene>
    <name type="ordered locus">Tgr7_2199</name>
</gene>
<feature type="chain" id="PRO_1000147530" description="PKHD-type hydroxylase Tgr7_2199">
    <location>
        <begin position="1"/>
        <end position="224"/>
    </location>
</feature>
<feature type="domain" description="Fe2OG dioxygenase" evidence="1">
    <location>
        <begin position="78"/>
        <end position="176"/>
    </location>
</feature>
<feature type="binding site" evidence="1">
    <location>
        <position position="96"/>
    </location>
    <ligand>
        <name>Fe cation</name>
        <dbReference type="ChEBI" id="CHEBI:24875"/>
    </ligand>
</feature>
<feature type="binding site" evidence="1">
    <location>
        <position position="98"/>
    </location>
    <ligand>
        <name>Fe cation</name>
        <dbReference type="ChEBI" id="CHEBI:24875"/>
    </ligand>
</feature>
<feature type="binding site" evidence="1">
    <location>
        <position position="157"/>
    </location>
    <ligand>
        <name>Fe cation</name>
        <dbReference type="ChEBI" id="CHEBI:24875"/>
    </ligand>
</feature>
<feature type="binding site" evidence="1">
    <location>
        <position position="167"/>
    </location>
    <ligand>
        <name>2-oxoglutarate</name>
        <dbReference type="ChEBI" id="CHEBI:16810"/>
    </ligand>
</feature>
<keyword id="KW-0223">Dioxygenase</keyword>
<keyword id="KW-0408">Iron</keyword>
<keyword id="KW-0479">Metal-binding</keyword>
<keyword id="KW-0560">Oxidoreductase</keyword>
<keyword id="KW-1185">Reference proteome</keyword>
<keyword id="KW-0847">Vitamin C</keyword>
<name>Y2199_THISH</name>
<evidence type="ECO:0000255" key="1">
    <source>
        <dbReference type="HAMAP-Rule" id="MF_00657"/>
    </source>
</evidence>
<comment type="cofactor">
    <cofactor evidence="1">
        <name>Fe(2+)</name>
        <dbReference type="ChEBI" id="CHEBI:29033"/>
    </cofactor>
    <text evidence="1">Binds 1 Fe(2+) ion per subunit.</text>
</comment>
<comment type="cofactor">
    <cofactor evidence="1">
        <name>L-ascorbate</name>
        <dbReference type="ChEBI" id="CHEBI:38290"/>
    </cofactor>
</comment>
<dbReference type="EC" id="1.14.11.-" evidence="1"/>
<dbReference type="EMBL" id="CP001339">
    <property type="protein sequence ID" value="ACL73279.1"/>
    <property type="molecule type" value="Genomic_DNA"/>
</dbReference>
<dbReference type="RefSeq" id="WP_012638757.1">
    <property type="nucleotide sequence ID" value="NC_011901.1"/>
</dbReference>
<dbReference type="SMR" id="B8GUF9"/>
<dbReference type="STRING" id="396588.Tgr7_2199"/>
<dbReference type="KEGG" id="tgr:Tgr7_2199"/>
<dbReference type="eggNOG" id="COG3128">
    <property type="taxonomic scope" value="Bacteria"/>
</dbReference>
<dbReference type="HOGENOM" id="CLU_106663_0_0_6"/>
<dbReference type="OrthoDB" id="9812472at2"/>
<dbReference type="Proteomes" id="UP000002383">
    <property type="component" value="Chromosome"/>
</dbReference>
<dbReference type="GO" id="GO:0016706">
    <property type="term" value="F:2-oxoglutarate-dependent dioxygenase activity"/>
    <property type="evidence" value="ECO:0007669"/>
    <property type="project" value="UniProtKB-UniRule"/>
</dbReference>
<dbReference type="GO" id="GO:0005506">
    <property type="term" value="F:iron ion binding"/>
    <property type="evidence" value="ECO:0007669"/>
    <property type="project" value="UniProtKB-UniRule"/>
</dbReference>
<dbReference type="GO" id="GO:0031418">
    <property type="term" value="F:L-ascorbic acid binding"/>
    <property type="evidence" value="ECO:0007669"/>
    <property type="project" value="UniProtKB-KW"/>
</dbReference>
<dbReference type="GO" id="GO:0006974">
    <property type="term" value="P:DNA damage response"/>
    <property type="evidence" value="ECO:0007669"/>
    <property type="project" value="TreeGrafter"/>
</dbReference>
<dbReference type="GO" id="GO:0006879">
    <property type="term" value="P:intracellular iron ion homeostasis"/>
    <property type="evidence" value="ECO:0007669"/>
    <property type="project" value="TreeGrafter"/>
</dbReference>
<dbReference type="Gene3D" id="2.60.120.620">
    <property type="entry name" value="q2cbj1_9rhob like domain"/>
    <property type="match status" value="1"/>
</dbReference>
<dbReference type="Gene3D" id="4.10.860.20">
    <property type="entry name" value="Rabenosyn, Rab binding domain"/>
    <property type="match status" value="1"/>
</dbReference>
<dbReference type="HAMAP" id="MF_00657">
    <property type="entry name" value="Hydroxyl_YbiX"/>
    <property type="match status" value="1"/>
</dbReference>
<dbReference type="InterPro" id="IPR005123">
    <property type="entry name" value="Oxoglu/Fe-dep_dioxygenase_dom"/>
</dbReference>
<dbReference type="InterPro" id="IPR023550">
    <property type="entry name" value="PKHD_hydroxylase"/>
</dbReference>
<dbReference type="InterPro" id="IPR006620">
    <property type="entry name" value="Pro_4_hyd_alph"/>
</dbReference>
<dbReference type="InterPro" id="IPR044862">
    <property type="entry name" value="Pro_4_hyd_alph_FE2OG_OXY"/>
</dbReference>
<dbReference type="NCBIfam" id="NF003974">
    <property type="entry name" value="PRK05467.1-3"/>
    <property type="match status" value="1"/>
</dbReference>
<dbReference type="NCBIfam" id="NF003975">
    <property type="entry name" value="PRK05467.1-4"/>
    <property type="match status" value="1"/>
</dbReference>
<dbReference type="PANTHER" id="PTHR41536">
    <property type="entry name" value="PKHD-TYPE HYDROXYLASE YBIX"/>
    <property type="match status" value="1"/>
</dbReference>
<dbReference type="PANTHER" id="PTHR41536:SF1">
    <property type="entry name" value="PKHD-TYPE HYDROXYLASE YBIX"/>
    <property type="match status" value="1"/>
</dbReference>
<dbReference type="Pfam" id="PF13640">
    <property type="entry name" value="2OG-FeII_Oxy_3"/>
    <property type="match status" value="1"/>
</dbReference>
<dbReference type="SMART" id="SM00702">
    <property type="entry name" value="P4Hc"/>
    <property type="match status" value="1"/>
</dbReference>
<dbReference type="PROSITE" id="PS51471">
    <property type="entry name" value="FE2OG_OXY"/>
    <property type="match status" value="1"/>
</dbReference>
<organism>
    <name type="scientific">Thioalkalivibrio sulfidiphilus (strain HL-EbGR7)</name>
    <dbReference type="NCBI Taxonomy" id="396588"/>
    <lineage>
        <taxon>Bacteria</taxon>
        <taxon>Pseudomonadati</taxon>
        <taxon>Pseudomonadota</taxon>
        <taxon>Gammaproteobacteria</taxon>
        <taxon>Chromatiales</taxon>
        <taxon>Ectothiorhodospiraceae</taxon>
        <taxon>Thioalkalivibrio</taxon>
    </lineage>
</organism>
<protein>
    <recommendedName>
        <fullName evidence="1">PKHD-type hydroxylase Tgr7_2199</fullName>
        <ecNumber evidence="1">1.14.11.-</ecNumber>
    </recommendedName>
</protein>
<proteinExistence type="inferred from homology"/>